<name>SARV_STAAR</name>
<organism>
    <name type="scientific">Staphylococcus aureus (strain MRSA252)</name>
    <dbReference type="NCBI Taxonomy" id="282458"/>
    <lineage>
        <taxon>Bacteria</taxon>
        <taxon>Bacillati</taxon>
        <taxon>Bacillota</taxon>
        <taxon>Bacilli</taxon>
        <taxon>Bacillales</taxon>
        <taxon>Staphylococcaceae</taxon>
        <taxon>Staphylococcus</taxon>
    </lineage>
</organism>
<sequence>MSNKVQRFIEAERELSQLKHWLKTTHKISIEEFVVLFKVYEAEKISGKELRDTLHFEMLWDTSKIDVIIRKIYKKELISKLRSETDERQVFYFYSTSQKKLLDKITKEIEVLSVTN</sequence>
<dbReference type="EMBL" id="BX571856">
    <property type="protein sequence ID" value="CAG41332.1"/>
    <property type="molecule type" value="Genomic_DNA"/>
</dbReference>
<dbReference type="RefSeq" id="WP_000066900.1">
    <property type="nucleotide sequence ID" value="NC_002952.2"/>
</dbReference>
<dbReference type="SMR" id="Q6GEG7"/>
<dbReference type="KEGG" id="sar:SAR2351"/>
<dbReference type="HOGENOM" id="CLU_2095367_0_0_9"/>
<dbReference type="Proteomes" id="UP000000596">
    <property type="component" value="Chromosome"/>
</dbReference>
<dbReference type="GO" id="GO:0005737">
    <property type="term" value="C:cytoplasm"/>
    <property type="evidence" value="ECO:0007669"/>
    <property type="project" value="UniProtKB-SubCell"/>
</dbReference>
<dbReference type="GO" id="GO:0003677">
    <property type="term" value="F:DNA binding"/>
    <property type="evidence" value="ECO:0007669"/>
    <property type="project" value="UniProtKB-KW"/>
</dbReference>
<dbReference type="GO" id="GO:0006355">
    <property type="term" value="P:regulation of DNA-templated transcription"/>
    <property type="evidence" value="ECO:0007669"/>
    <property type="project" value="InterPro"/>
</dbReference>
<dbReference type="Gene3D" id="1.10.10.10">
    <property type="entry name" value="Winged helix-like DNA-binding domain superfamily/Winged helix DNA-binding domain"/>
    <property type="match status" value="1"/>
</dbReference>
<dbReference type="InterPro" id="IPR010166">
    <property type="entry name" value="SarA/Rot_dom"/>
</dbReference>
<dbReference type="InterPro" id="IPR055166">
    <property type="entry name" value="Transc_reg_Sar_Rot_HTH"/>
</dbReference>
<dbReference type="InterPro" id="IPR036388">
    <property type="entry name" value="WH-like_DNA-bd_sf"/>
</dbReference>
<dbReference type="InterPro" id="IPR036390">
    <property type="entry name" value="WH_DNA-bd_sf"/>
</dbReference>
<dbReference type="NCBIfam" id="TIGR01889">
    <property type="entry name" value="Staph_reg_Sar"/>
    <property type="match status" value="1"/>
</dbReference>
<dbReference type="Pfam" id="PF22381">
    <property type="entry name" value="Staph_reg_Sar_Rot"/>
    <property type="match status" value="1"/>
</dbReference>
<dbReference type="SUPFAM" id="SSF46785">
    <property type="entry name" value="Winged helix' DNA-binding domain"/>
    <property type="match status" value="1"/>
</dbReference>
<feature type="chain" id="PRO_0000219611" description="HTH-type transcriptional regulator SarV">
    <location>
        <begin position="1"/>
        <end position="116"/>
    </location>
</feature>
<feature type="DNA-binding region" description="H-T-H motif" evidence="2">
    <location>
        <begin position="51"/>
        <end position="74"/>
    </location>
</feature>
<reference key="1">
    <citation type="journal article" date="2004" name="Proc. Natl. Acad. Sci. U.S.A.">
        <title>Complete genomes of two clinical Staphylococcus aureus strains: evidence for the rapid evolution of virulence and drug resistance.</title>
        <authorList>
            <person name="Holden M.T.G."/>
            <person name="Feil E.J."/>
            <person name="Lindsay J.A."/>
            <person name="Peacock S.J."/>
            <person name="Day N.P.J."/>
            <person name="Enright M.C."/>
            <person name="Foster T.J."/>
            <person name="Moore C.E."/>
            <person name="Hurst L."/>
            <person name="Atkin R."/>
            <person name="Barron A."/>
            <person name="Bason N."/>
            <person name="Bentley S.D."/>
            <person name="Chillingworth C."/>
            <person name="Chillingworth T."/>
            <person name="Churcher C."/>
            <person name="Clark L."/>
            <person name="Corton C."/>
            <person name="Cronin A."/>
            <person name="Doggett J."/>
            <person name="Dowd L."/>
            <person name="Feltwell T."/>
            <person name="Hance Z."/>
            <person name="Harris B."/>
            <person name="Hauser H."/>
            <person name="Holroyd S."/>
            <person name="Jagels K."/>
            <person name="James K.D."/>
            <person name="Lennard N."/>
            <person name="Line A."/>
            <person name="Mayes R."/>
            <person name="Moule S."/>
            <person name="Mungall K."/>
            <person name="Ormond D."/>
            <person name="Quail M.A."/>
            <person name="Rabbinowitsch E."/>
            <person name="Rutherford K.M."/>
            <person name="Sanders M."/>
            <person name="Sharp S."/>
            <person name="Simmonds M."/>
            <person name="Stevens K."/>
            <person name="Whitehead S."/>
            <person name="Barrell B.G."/>
            <person name="Spratt B.G."/>
            <person name="Parkhill J."/>
        </authorList>
    </citation>
    <scope>NUCLEOTIDE SEQUENCE [LARGE SCALE GENOMIC DNA]</scope>
    <source>
        <strain>MRSA252</strain>
    </source>
</reference>
<comment type="function">
    <text evidence="1">Part of the pathway by which MgrA and SarA control autolysis.</text>
</comment>
<comment type="subcellular location">
    <subcellularLocation>
        <location evidence="1">Cytoplasm</location>
    </subcellularLocation>
</comment>
<comment type="similarity">
    <text evidence="3">Belongs to the SarA family.</text>
</comment>
<accession>Q6GEG7</accession>
<evidence type="ECO:0000250" key="1"/>
<evidence type="ECO:0000255" key="2"/>
<evidence type="ECO:0000305" key="3"/>
<protein>
    <recommendedName>
        <fullName>HTH-type transcriptional regulator SarV</fullName>
    </recommendedName>
    <alternativeName>
        <fullName>Staphylococcal accessory regulator V</fullName>
    </alternativeName>
</protein>
<gene>
    <name type="primary">sarV</name>
    <name type="ordered locus">SAR2351</name>
</gene>
<proteinExistence type="inferred from homology"/>
<keyword id="KW-0010">Activator</keyword>
<keyword id="KW-0963">Cytoplasm</keyword>
<keyword id="KW-0238">DNA-binding</keyword>
<keyword id="KW-0804">Transcription</keyword>
<keyword id="KW-0805">Transcription regulation</keyword>
<keyword id="KW-0843">Virulence</keyword>